<dbReference type="EC" id="6.5.1.2" evidence="1"/>
<dbReference type="EMBL" id="CP001158">
    <property type="protein sequence ID" value="ACL29894.1"/>
    <property type="molecule type" value="Genomic_DNA"/>
</dbReference>
<dbReference type="RefSeq" id="WP_012619417.1">
    <property type="nucleotide sequence ID" value="NC_011834.1"/>
</dbReference>
<dbReference type="SMR" id="B8D6X9"/>
<dbReference type="KEGG" id="bau:BUAPTUC7_067"/>
<dbReference type="HOGENOM" id="CLU_007764_2_1_6"/>
<dbReference type="GO" id="GO:0005829">
    <property type="term" value="C:cytosol"/>
    <property type="evidence" value="ECO:0007669"/>
    <property type="project" value="TreeGrafter"/>
</dbReference>
<dbReference type="GO" id="GO:0003677">
    <property type="term" value="F:DNA binding"/>
    <property type="evidence" value="ECO:0007669"/>
    <property type="project" value="InterPro"/>
</dbReference>
<dbReference type="GO" id="GO:0003911">
    <property type="term" value="F:DNA ligase (NAD+) activity"/>
    <property type="evidence" value="ECO:0007669"/>
    <property type="project" value="UniProtKB-UniRule"/>
</dbReference>
<dbReference type="GO" id="GO:0046872">
    <property type="term" value="F:metal ion binding"/>
    <property type="evidence" value="ECO:0007669"/>
    <property type="project" value="UniProtKB-KW"/>
</dbReference>
<dbReference type="GO" id="GO:0006281">
    <property type="term" value="P:DNA repair"/>
    <property type="evidence" value="ECO:0007669"/>
    <property type="project" value="UniProtKB-KW"/>
</dbReference>
<dbReference type="GO" id="GO:0006260">
    <property type="term" value="P:DNA replication"/>
    <property type="evidence" value="ECO:0007669"/>
    <property type="project" value="UniProtKB-KW"/>
</dbReference>
<dbReference type="CDD" id="cd17748">
    <property type="entry name" value="BRCT_DNA_ligase_like"/>
    <property type="match status" value="1"/>
</dbReference>
<dbReference type="CDD" id="cd00114">
    <property type="entry name" value="LIGANc"/>
    <property type="match status" value="1"/>
</dbReference>
<dbReference type="FunFam" id="3.30.470.30:FF:000001">
    <property type="entry name" value="DNA ligase"/>
    <property type="match status" value="1"/>
</dbReference>
<dbReference type="Gene3D" id="6.20.10.30">
    <property type="match status" value="1"/>
</dbReference>
<dbReference type="Gene3D" id="1.10.150.20">
    <property type="entry name" value="5' to 3' exonuclease, C-terminal subdomain"/>
    <property type="match status" value="2"/>
</dbReference>
<dbReference type="Gene3D" id="3.40.50.10190">
    <property type="entry name" value="BRCT domain"/>
    <property type="match status" value="1"/>
</dbReference>
<dbReference type="Gene3D" id="3.30.470.30">
    <property type="entry name" value="DNA ligase/mRNA capping enzyme"/>
    <property type="match status" value="1"/>
</dbReference>
<dbReference type="Gene3D" id="1.10.287.610">
    <property type="entry name" value="Helix hairpin bin"/>
    <property type="match status" value="1"/>
</dbReference>
<dbReference type="Gene3D" id="2.40.50.140">
    <property type="entry name" value="Nucleic acid-binding proteins"/>
    <property type="match status" value="1"/>
</dbReference>
<dbReference type="HAMAP" id="MF_01588">
    <property type="entry name" value="DNA_ligase_A"/>
    <property type="match status" value="1"/>
</dbReference>
<dbReference type="InterPro" id="IPR001357">
    <property type="entry name" value="BRCT_dom"/>
</dbReference>
<dbReference type="InterPro" id="IPR036420">
    <property type="entry name" value="BRCT_dom_sf"/>
</dbReference>
<dbReference type="InterPro" id="IPR041663">
    <property type="entry name" value="DisA/LigA_HHH"/>
</dbReference>
<dbReference type="InterPro" id="IPR001679">
    <property type="entry name" value="DNA_ligase"/>
</dbReference>
<dbReference type="InterPro" id="IPR018239">
    <property type="entry name" value="DNA_ligase_AS"/>
</dbReference>
<dbReference type="InterPro" id="IPR033136">
    <property type="entry name" value="DNA_ligase_CS"/>
</dbReference>
<dbReference type="InterPro" id="IPR013839">
    <property type="entry name" value="DNAligase_adenylation"/>
</dbReference>
<dbReference type="InterPro" id="IPR013840">
    <property type="entry name" value="DNAligase_N"/>
</dbReference>
<dbReference type="InterPro" id="IPR003583">
    <property type="entry name" value="Hlx-hairpin-Hlx_DNA-bd_motif"/>
</dbReference>
<dbReference type="InterPro" id="IPR012340">
    <property type="entry name" value="NA-bd_OB-fold"/>
</dbReference>
<dbReference type="InterPro" id="IPR004150">
    <property type="entry name" value="NAD_DNA_ligase_OB"/>
</dbReference>
<dbReference type="InterPro" id="IPR010994">
    <property type="entry name" value="RuvA_2-like"/>
</dbReference>
<dbReference type="NCBIfam" id="TIGR00575">
    <property type="entry name" value="dnlj"/>
    <property type="match status" value="1"/>
</dbReference>
<dbReference type="NCBIfam" id="NF005932">
    <property type="entry name" value="PRK07956.1"/>
    <property type="match status" value="1"/>
</dbReference>
<dbReference type="PANTHER" id="PTHR23389">
    <property type="entry name" value="CHROMOSOME TRANSMISSION FIDELITY FACTOR 18"/>
    <property type="match status" value="1"/>
</dbReference>
<dbReference type="PANTHER" id="PTHR23389:SF9">
    <property type="entry name" value="DNA LIGASE"/>
    <property type="match status" value="1"/>
</dbReference>
<dbReference type="Pfam" id="PF00533">
    <property type="entry name" value="BRCT"/>
    <property type="match status" value="1"/>
</dbReference>
<dbReference type="Pfam" id="PF01653">
    <property type="entry name" value="DNA_ligase_aden"/>
    <property type="match status" value="1"/>
</dbReference>
<dbReference type="Pfam" id="PF03120">
    <property type="entry name" value="DNA_ligase_OB"/>
    <property type="match status" value="1"/>
</dbReference>
<dbReference type="Pfam" id="PF12826">
    <property type="entry name" value="HHH_2"/>
    <property type="match status" value="1"/>
</dbReference>
<dbReference type="Pfam" id="PF22745">
    <property type="entry name" value="Nlig-Ia"/>
    <property type="match status" value="1"/>
</dbReference>
<dbReference type="PIRSF" id="PIRSF001604">
    <property type="entry name" value="LigA"/>
    <property type="match status" value="1"/>
</dbReference>
<dbReference type="SMART" id="SM00292">
    <property type="entry name" value="BRCT"/>
    <property type="match status" value="1"/>
</dbReference>
<dbReference type="SMART" id="SM00278">
    <property type="entry name" value="HhH1"/>
    <property type="match status" value="3"/>
</dbReference>
<dbReference type="SMART" id="SM00532">
    <property type="entry name" value="LIGANc"/>
    <property type="match status" value="1"/>
</dbReference>
<dbReference type="SUPFAM" id="SSF52113">
    <property type="entry name" value="BRCT domain"/>
    <property type="match status" value="1"/>
</dbReference>
<dbReference type="SUPFAM" id="SSF56091">
    <property type="entry name" value="DNA ligase/mRNA capping enzyme, catalytic domain"/>
    <property type="match status" value="1"/>
</dbReference>
<dbReference type="SUPFAM" id="SSF50249">
    <property type="entry name" value="Nucleic acid-binding proteins"/>
    <property type="match status" value="1"/>
</dbReference>
<dbReference type="SUPFAM" id="SSF47781">
    <property type="entry name" value="RuvA domain 2-like"/>
    <property type="match status" value="1"/>
</dbReference>
<dbReference type="PROSITE" id="PS50172">
    <property type="entry name" value="BRCT"/>
    <property type="match status" value="1"/>
</dbReference>
<dbReference type="PROSITE" id="PS01055">
    <property type="entry name" value="DNA_LIGASE_N1"/>
    <property type="match status" value="1"/>
</dbReference>
<dbReference type="PROSITE" id="PS01056">
    <property type="entry name" value="DNA_LIGASE_N2"/>
    <property type="match status" value="1"/>
</dbReference>
<gene>
    <name evidence="1" type="primary">ligA</name>
    <name type="ordered locus">BUAPTUC7_067</name>
</gene>
<feature type="chain" id="PRO_0000380321" description="DNA ligase">
    <location>
        <begin position="1"/>
        <end position="676"/>
    </location>
</feature>
<feature type="domain" description="BRCT" evidence="1">
    <location>
        <begin position="595"/>
        <end position="676"/>
    </location>
</feature>
<feature type="active site" description="N6-AMP-lysine intermediate" evidence="1">
    <location>
        <position position="115"/>
    </location>
</feature>
<feature type="binding site" evidence="1">
    <location>
        <begin position="32"/>
        <end position="36"/>
    </location>
    <ligand>
        <name>NAD(+)</name>
        <dbReference type="ChEBI" id="CHEBI:57540"/>
    </ligand>
</feature>
<feature type="binding site" evidence="1">
    <location>
        <begin position="81"/>
        <end position="82"/>
    </location>
    <ligand>
        <name>NAD(+)</name>
        <dbReference type="ChEBI" id="CHEBI:57540"/>
    </ligand>
</feature>
<feature type="binding site" evidence="1">
    <location>
        <position position="113"/>
    </location>
    <ligand>
        <name>NAD(+)</name>
        <dbReference type="ChEBI" id="CHEBI:57540"/>
    </ligand>
</feature>
<feature type="binding site" evidence="1">
    <location>
        <position position="136"/>
    </location>
    <ligand>
        <name>NAD(+)</name>
        <dbReference type="ChEBI" id="CHEBI:57540"/>
    </ligand>
</feature>
<feature type="binding site" evidence="1">
    <location>
        <position position="173"/>
    </location>
    <ligand>
        <name>NAD(+)</name>
        <dbReference type="ChEBI" id="CHEBI:57540"/>
    </ligand>
</feature>
<feature type="binding site" evidence="1">
    <location>
        <position position="291"/>
    </location>
    <ligand>
        <name>NAD(+)</name>
        <dbReference type="ChEBI" id="CHEBI:57540"/>
    </ligand>
</feature>
<feature type="binding site" evidence="1">
    <location>
        <position position="315"/>
    </location>
    <ligand>
        <name>NAD(+)</name>
        <dbReference type="ChEBI" id="CHEBI:57540"/>
    </ligand>
</feature>
<feature type="binding site" evidence="1">
    <location>
        <position position="409"/>
    </location>
    <ligand>
        <name>Zn(2+)</name>
        <dbReference type="ChEBI" id="CHEBI:29105"/>
    </ligand>
</feature>
<feature type="binding site" evidence="1">
    <location>
        <position position="412"/>
    </location>
    <ligand>
        <name>Zn(2+)</name>
        <dbReference type="ChEBI" id="CHEBI:29105"/>
    </ligand>
</feature>
<feature type="binding site" evidence="1">
    <location>
        <position position="427"/>
    </location>
    <ligand>
        <name>Zn(2+)</name>
        <dbReference type="ChEBI" id="CHEBI:29105"/>
    </ligand>
</feature>
<feature type="binding site" evidence="1">
    <location>
        <position position="433"/>
    </location>
    <ligand>
        <name>Zn(2+)</name>
        <dbReference type="ChEBI" id="CHEBI:29105"/>
    </ligand>
</feature>
<keyword id="KW-0227">DNA damage</keyword>
<keyword id="KW-0234">DNA repair</keyword>
<keyword id="KW-0235">DNA replication</keyword>
<keyword id="KW-0436">Ligase</keyword>
<keyword id="KW-0460">Magnesium</keyword>
<keyword id="KW-0464">Manganese</keyword>
<keyword id="KW-0479">Metal-binding</keyword>
<keyword id="KW-0520">NAD</keyword>
<keyword id="KW-0862">Zinc</keyword>
<sequence>MTSTKDKIEKLRKILLKYEYFYHTLNQSIISDAEYDYLFRQLYELELKNKELIPSDSPTQKVGSHILQKFKKIKHFSPMLSLENTFDVNGYLNFKKRIKKSIHNNEPLSFCCELKLDGVAISIIYEEGIFVRAATRGDGFEGENITSNARMIDSIPLKLKGIDIPKRLEIRGEVFMLKSNFIKLNKKYKLNQNKYFSNPRNAAAGSLRHIDPNITAERKLIFSCHGCDFFVKTNKELTTHYQRLMKCLSWGIPVNKEIVICSSDIEIIQFYKKIAQKRNFLDFDIDGIVIKVNSLELQKKIGSTTKSPRWAIAFKFSPKERITTLNDVKFQVGRTGVITPVAYFNPVYISGVMISKASLHNKNEIERLNLHFNDTITICRSGDVIPRLLNVIEIRRCDNAKKIIFPSFCPVCNTELLENIEEKLIRCHSGLTCDAQKKQALYHFFSKKSLYVVGLGPKIINELVEKGLVKNPIDFFYLKDIDLIQLKNVGKRKSIKIINSIKKCKKTTLKCFIYALGIPGVGEVVAGKIANYFIKLDKLMNSNILELNCISGVGKIISNNIFNYFSTISNREMVVKLIKQAGIFLNDQEIHKINSEKTYFFNKKIVLTGVFKSFSRIELKTILLSLGAKISNNISRKTDFLIYGNNFGSKFFRAKDLDVKIINQEELNSLIRIKEQ</sequence>
<organism>
    <name type="scientific">Buchnera aphidicola subsp. Acyrthosiphon pisum (strain Tuc7)</name>
    <dbReference type="NCBI Taxonomy" id="561501"/>
    <lineage>
        <taxon>Bacteria</taxon>
        <taxon>Pseudomonadati</taxon>
        <taxon>Pseudomonadota</taxon>
        <taxon>Gammaproteobacteria</taxon>
        <taxon>Enterobacterales</taxon>
        <taxon>Erwiniaceae</taxon>
        <taxon>Buchnera</taxon>
    </lineage>
</organism>
<evidence type="ECO:0000255" key="1">
    <source>
        <dbReference type="HAMAP-Rule" id="MF_01588"/>
    </source>
</evidence>
<name>DNLJ_BUCAT</name>
<accession>B8D6X9</accession>
<proteinExistence type="inferred from homology"/>
<reference key="1">
    <citation type="journal article" date="2009" name="Science">
        <title>The dynamics and time scale of ongoing genomic erosion in symbiotic bacteria.</title>
        <authorList>
            <person name="Moran N.A."/>
            <person name="McLaughlin H.J."/>
            <person name="Sorek R."/>
        </authorList>
    </citation>
    <scope>NUCLEOTIDE SEQUENCE [LARGE SCALE GENOMIC DNA]</scope>
    <source>
        <strain>Tuc7</strain>
    </source>
</reference>
<protein>
    <recommendedName>
        <fullName evidence="1">DNA ligase</fullName>
        <ecNumber evidence="1">6.5.1.2</ecNumber>
    </recommendedName>
    <alternativeName>
        <fullName evidence="1">Polydeoxyribonucleotide synthase [NAD(+)]</fullName>
    </alternativeName>
</protein>
<comment type="function">
    <text evidence="1">DNA ligase that catalyzes the formation of phosphodiester linkages between 5'-phosphoryl and 3'-hydroxyl groups in double-stranded DNA using NAD as a coenzyme and as the energy source for the reaction. It is essential for DNA replication and repair of damaged DNA.</text>
</comment>
<comment type="catalytic activity">
    <reaction evidence="1">
        <text>NAD(+) + (deoxyribonucleotide)n-3'-hydroxyl + 5'-phospho-(deoxyribonucleotide)m = (deoxyribonucleotide)n+m + AMP + beta-nicotinamide D-nucleotide.</text>
        <dbReference type="EC" id="6.5.1.2"/>
    </reaction>
</comment>
<comment type="cofactor">
    <cofactor evidence="1">
        <name>Mg(2+)</name>
        <dbReference type="ChEBI" id="CHEBI:18420"/>
    </cofactor>
    <cofactor evidence="1">
        <name>Mn(2+)</name>
        <dbReference type="ChEBI" id="CHEBI:29035"/>
    </cofactor>
</comment>
<comment type="similarity">
    <text evidence="1">Belongs to the NAD-dependent DNA ligase family. LigA subfamily.</text>
</comment>